<name>BGLS_KLUMA</name>
<keyword id="KW-0119">Carbohydrate metabolism</keyword>
<keyword id="KW-0136">Cellulose degradation</keyword>
<keyword id="KW-0325">Glycoprotein</keyword>
<keyword id="KW-0326">Glycosidase</keyword>
<keyword id="KW-0378">Hydrolase</keyword>
<keyword id="KW-0624">Polysaccharide degradation</keyword>
<keyword id="KW-0732">Signal</keyword>
<sequence>MSKFDVEQLLSELNQDEKISLLSAVDFWHTKKIERLGIPAVRVSDGPNGIRGTKFFDGVPSGCFPNGTGLASTFDRDLLETAGKLMAKESIAKNAAVILGPTTNMQRGPLGGRGFESFSEDPYLAGMATSSVVKGMQGEGIAATVKHFVCNDLEDQRFSSNSIVSERALREIYLEPFRLAVKHANPVCIMTAYNKVNGDHCSQSKKLLIDILRDEWKWDGMLMSDWFGTYTTAAAIKNGLDIEFPGPTRWRTRALVSHSLNSREQITTEDVDDRVRQVLKMIKFVVDNLEKTGIVENGPESTSNNTKETSDLLREIAADSIVLLKNKNNYLTSKERRQYHVIGPNAKAKTSSGGGSASMNSYYVVSPYEGIVNKLGKEVDYTVGAYSHKSIGGLAESSLIDAAKPADAENAGLIAKFYSNPVEERSEDEEPFHVTKVNRSNVHLFDFKHEKVDPKNPYFFVTLTGQYVPQEDGDYIFSLQVYGSGLFYLNDELIIDQKHNQERGSFCFGAGTKERTKKLTLKKGQVYNVRVEYGSGPTSGLVGEFGAGGFQAGVIKAIDDDEEIRNAAELAAKHDKAVLIIGLNGEWETEGYDRENMDLPKRTNELVRAVLKANPNTVIVNQSGTPVEFPWLEEANALVQAWYGGNELGNAIADVLYGDVVPNGKLSLSWPFKLQDNPAFLNFKTEFGRVVYGEDIFVGYRYYEKLQRKVAFPFGYGLSYTTFELDISDFKVTDDKIDISVDVKNTGDKFAGSEVVQVYFSALNSKVSRPVKELKGFEKVHLEPGEKKTVNIELELKDAISYFNEELGKWHVEAGEYLVSVGTSSDDILSVKEFKVEKDLYWKGL</sequence>
<reference key="1">
    <citation type="journal article" date="1987" name="Curr. Genet.">
        <title>Sequence and transcription of the beta-glucosidase gene of Kluyveromyces fragilis cloned in Saccharomyces cerevisiae.</title>
        <authorList>
            <person name="Raynal A."/>
            <person name="Gerbaud C."/>
            <person name="Francingues M.C."/>
            <person name="Guerineau M."/>
        </authorList>
    </citation>
    <scope>NUCLEOTIDE SEQUENCE [GENOMIC DNA]</scope>
    <source>
        <strain>ATCC 12424 / NRRL Y-610</strain>
    </source>
</reference>
<feature type="signal peptide">
    <location>
        <begin position="1"/>
        <end status="unknown"/>
    </location>
</feature>
<feature type="chain" id="PRO_0000011778" description="Beta-glucosidase">
    <location>
        <begin status="unknown"/>
        <end position="845"/>
    </location>
</feature>
<feature type="domain" description="PA14" evidence="3">
    <location>
        <begin position="408"/>
        <end position="568"/>
    </location>
</feature>
<feature type="active site" evidence="1">
    <location>
        <position position="225"/>
    </location>
</feature>
<feature type="glycosylation site" description="N-linked (GlcNAc...) asparagine" evidence="2">
    <location>
        <position position="66"/>
    </location>
</feature>
<feature type="glycosylation site" description="N-linked (GlcNAc...) asparagine" evidence="2">
    <location>
        <position position="304"/>
    </location>
</feature>
<feature type="glycosylation site" description="N-linked (GlcNAc...) asparagine" evidence="2">
    <location>
        <position position="438"/>
    </location>
</feature>
<feature type="glycosylation site" description="N-linked (GlcNAc...) asparagine" evidence="2">
    <location>
        <position position="621"/>
    </location>
</feature>
<accession>P07337</accession>
<comment type="catalytic activity">
    <reaction>
        <text>Hydrolysis of terminal, non-reducing beta-D-glucosyl residues with release of beta-D-glucose.</text>
        <dbReference type="EC" id="3.2.1.21"/>
    </reaction>
</comment>
<comment type="pathway">
    <text>Glycan metabolism; cellulose degradation.</text>
</comment>
<comment type="subunit">
    <text>Homotetramer.</text>
</comment>
<comment type="similarity">
    <text evidence="4">Belongs to the glycosyl hydrolase 3 family.</text>
</comment>
<evidence type="ECO:0000250" key="1"/>
<evidence type="ECO:0000255" key="2"/>
<evidence type="ECO:0000255" key="3">
    <source>
        <dbReference type="PROSITE-ProRule" id="PRU01164"/>
    </source>
</evidence>
<evidence type="ECO:0000305" key="4"/>
<protein>
    <recommendedName>
        <fullName>Beta-glucosidase</fullName>
        <ecNumber>3.2.1.21</ecNumber>
    </recommendedName>
    <alternativeName>
        <fullName>Beta-D-glucoside glucohydrolase</fullName>
    </alternativeName>
    <alternativeName>
        <fullName>Cellobiase</fullName>
    </alternativeName>
    <alternativeName>
        <fullName>Gentiobiase</fullName>
    </alternativeName>
</protein>
<organism>
    <name type="scientific">Kluyveromyces marxianus</name>
    <name type="common">Yeast</name>
    <name type="synonym">Candida kefyr</name>
    <dbReference type="NCBI Taxonomy" id="4911"/>
    <lineage>
        <taxon>Eukaryota</taxon>
        <taxon>Fungi</taxon>
        <taxon>Dikarya</taxon>
        <taxon>Ascomycota</taxon>
        <taxon>Saccharomycotina</taxon>
        <taxon>Saccharomycetes</taxon>
        <taxon>Saccharomycetales</taxon>
        <taxon>Saccharomycetaceae</taxon>
        <taxon>Kluyveromyces</taxon>
    </lineage>
</organism>
<dbReference type="EC" id="3.2.1.21"/>
<dbReference type="EMBL" id="X05918">
    <property type="protein sequence ID" value="CAA29353.1"/>
    <property type="molecule type" value="Genomic_DNA"/>
</dbReference>
<dbReference type="PIR" id="A29148">
    <property type="entry name" value="GLVK"/>
</dbReference>
<dbReference type="SMR" id="P07337"/>
<dbReference type="CAZy" id="GH3">
    <property type="family name" value="Glycoside Hydrolase Family 3"/>
</dbReference>
<dbReference type="VEuPathDB" id="FungiDB:KLMA_30011"/>
<dbReference type="BRENDA" id="3.2.1.21">
    <property type="organism ID" value="1120"/>
</dbReference>
<dbReference type="UniPathway" id="UPA00696"/>
<dbReference type="GO" id="GO:0008422">
    <property type="term" value="F:beta-glucosidase activity"/>
    <property type="evidence" value="ECO:0007669"/>
    <property type="project" value="UniProtKB-EC"/>
</dbReference>
<dbReference type="GO" id="GO:0030245">
    <property type="term" value="P:cellulose catabolic process"/>
    <property type="evidence" value="ECO:0007669"/>
    <property type="project" value="UniProtKB-UniPathway"/>
</dbReference>
<dbReference type="FunFam" id="3.20.20.300:FF:000006">
    <property type="entry name" value="Beta-glucosidase H"/>
    <property type="match status" value="1"/>
</dbReference>
<dbReference type="FunFam" id="2.60.40.10:FF:000495">
    <property type="entry name" value="Periplasmic beta-glucosidase"/>
    <property type="match status" value="1"/>
</dbReference>
<dbReference type="Gene3D" id="2.60.120.260">
    <property type="entry name" value="Galactose-binding domain-like"/>
    <property type="match status" value="1"/>
</dbReference>
<dbReference type="Gene3D" id="3.40.50.1700">
    <property type="entry name" value="Glycoside hydrolase family 3 C-terminal domain"/>
    <property type="match status" value="1"/>
</dbReference>
<dbReference type="Gene3D" id="3.20.20.300">
    <property type="entry name" value="Glycoside hydrolase, family 3, N-terminal domain"/>
    <property type="match status" value="1"/>
</dbReference>
<dbReference type="Gene3D" id="2.60.40.10">
    <property type="entry name" value="Immunoglobulins"/>
    <property type="match status" value="1"/>
</dbReference>
<dbReference type="InterPro" id="IPR050288">
    <property type="entry name" value="Cellulose_deg_GH3"/>
</dbReference>
<dbReference type="InterPro" id="IPR026891">
    <property type="entry name" value="Fn3-like"/>
</dbReference>
<dbReference type="InterPro" id="IPR019800">
    <property type="entry name" value="Glyco_hydro_3_AS"/>
</dbReference>
<dbReference type="InterPro" id="IPR002772">
    <property type="entry name" value="Glyco_hydro_3_C"/>
</dbReference>
<dbReference type="InterPro" id="IPR036881">
    <property type="entry name" value="Glyco_hydro_3_C_sf"/>
</dbReference>
<dbReference type="InterPro" id="IPR001764">
    <property type="entry name" value="Glyco_hydro_3_N"/>
</dbReference>
<dbReference type="InterPro" id="IPR036962">
    <property type="entry name" value="Glyco_hydro_3_N_sf"/>
</dbReference>
<dbReference type="InterPro" id="IPR017853">
    <property type="entry name" value="Glycoside_hydrolase_SF"/>
</dbReference>
<dbReference type="InterPro" id="IPR013783">
    <property type="entry name" value="Ig-like_fold"/>
</dbReference>
<dbReference type="InterPro" id="IPR037524">
    <property type="entry name" value="PA14/GLEYA"/>
</dbReference>
<dbReference type="InterPro" id="IPR011658">
    <property type="entry name" value="PA14_dom"/>
</dbReference>
<dbReference type="PANTHER" id="PTHR42715">
    <property type="entry name" value="BETA-GLUCOSIDASE"/>
    <property type="match status" value="1"/>
</dbReference>
<dbReference type="PANTHER" id="PTHR42715:SF27">
    <property type="entry name" value="BETA-GLUCOSIDASE-RELATED"/>
    <property type="match status" value="1"/>
</dbReference>
<dbReference type="Pfam" id="PF14310">
    <property type="entry name" value="Fn3-like"/>
    <property type="match status" value="1"/>
</dbReference>
<dbReference type="Pfam" id="PF00933">
    <property type="entry name" value="Glyco_hydro_3"/>
    <property type="match status" value="1"/>
</dbReference>
<dbReference type="Pfam" id="PF01915">
    <property type="entry name" value="Glyco_hydro_3_C"/>
    <property type="match status" value="1"/>
</dbReference>
<dbReference type="Pfam" id="PF07691">
    <property type="entry name" value="PA14"/>
    <property type="match status" value="1"/>
</dbReference>
<dbReference type="PRINTS" id="PR00133">
    <property type="entry name" value="GLHYDRLASE3"/>
</dbReference>
<dbReference type="SMART" id="SM01217">
    <property type="entry name" value="Fn3_like"/>
    <property type="match status" value="1"/>
</dbReference>
<dbReference type="SMART" id="SM00758">
    <property type="entry name" value="PA14"/>
    <property type="match status" value="1"/>
</dbReference>
<dbReference type="SUPFAM" id="SSF51445">
    <property type="entry name" value="(Trans)glycosidases"/>
    <property type="match status" value="1"/>
</dbReference>
<dbReference type="SUPFAM" id="SSF56988">
    <property type="entry name" value="Anthrax protective antigen"/>
    <property type="match status" value="1"/>
</dbReference>
<dbReference type="SUPFAM" id="SSF52279">
    <property type="entry name" value="Beta-D-glucan exohydrolase, C-terminal domain"/>
    <property type="match status" value="1"/>
</dbReference>
<dbReference type="PROSITE" id="PS00775">
    <property type="entry name" value="GLYCOSYL_HYDROL_F3"/>
    <property type="match status" value="1"/>
</dbReference>
<dbReference type="PROSITE" id="PS51820">
    <property type="entry name" value="PA14"/>
    <property type="match status" value="1"/>
</dbReference>
<proteinExistence type="inferred from homology"/>